<proteinExistence type="inferred from homology"/>
<gene>
    <name evidence="3" type="primary">polC</name>
    <name type="synonym">polA2</name>
    <name type="ordered locus">HQ_3461A</name>
</gene>
<protein>
    <recommendedName>
        <fullName evidence="3">DNA polymerase II large subunit</fullName>
        <shortName evidence="3">Pol II</shortName>
        <ecNumber evidence="3">2.7.7.7</ecNumber>
    </recommendedName>
    <alternativeName>
        <fullName evidence="3">Exodeoxyribonuclease large subunit</fullName>
        <ecNumber evidence="3">3.1.11.1</ecNumber>
    </alternativeName>
    <component>
        <recommendedName>
            <fullName>Hwa polC 1 intein</fullName>
        </recommendedName>
        <alternativeName>
            <fullName>Hwa pol II 1 intein</fullName>
        </alternativeName>
    </component>
    <component>
        <recommendedName>
            <fullName>Hwa polC 2 intein</fullName>
        </recommendedName>
        <alternativeName>
            <fullName>Hwa pol II 2 intein</fullName>
        </alternativeName>
    </component>
</protein>
<reference key="1">
    <citation type="journal article" date="2006" name="BMC Genomics">
        <title>The genome of the square archaeon Haloquadratum walsbyi: life at the limits of water activity.</title>
        <authorList>
            <person name="Bolhuis H."/>
            <person name="Palm P."/>
            <person name="Wende A."/>
            <person name="Falb M."/>
            <person name="Rampp M."/>
            <person name="Rodriguez-Valera F."/>
            <person name="Pfeiffer F."/>
            <person name="Oesterhelt D."/>
        </authorList>
    </citation>
    <scope>NUCLEOTIDE SEQUENCE [LARGE SCALE GENOMIC DNA]</scope>
    <source>
        <strain>DSM 16790 / HBSQ001</strain>
    </source>
</reference>
<dbReference type="EC" id="2.7.7.7" evidence="3"/>
<dbReference type="EC" id="3.1.11.1" evidence="3"/>
<dbReference type="EMBL" id="AM180088">
    <property type="protein sequence ID" value="CAJ53557.1"/>
    <property type="molecule type" value="Genomic_DNA"/>
</dbReference>
<dbReference type="RefSeq" id="WP_011572651.1">
    <property type="nucleotide sequence ID" value="NC_008212.1"/>
</dbReference>
<dbReference type="SMR" id="Q18ER3"/>
<dbReference type="STRING" id="362976.HQ_3461A"/>
<dbReference type="GeneID" id="95969032"/>
<dbReference type="KEGG" id="hwa:HQ_3461A"/>
<dbReference type="eggNOG" id="arCOG03145">
    <property type="taxonomic scope" value="Archaea"/>
</dbReference>
<dbReference type="eggNOG" id="arCOG03147">
    <property type="taxonomic scope" value="Archaea"/>
</dbReference>
<dbReference type="eggNOG" id="arCOG04447">
    <property type="taxonomic scope" value="Archaea"/>
</dbReference>
<dbReference type="HOGENOM" id="CLU_001154_0_0_2"/>
<dbReference type="Proteomes" id="UP000001975">
    <property type="component" value="Chromosome"/>
</dbReference>
<dbReference type="GO" id="GO:0003677">
    <property type="term" value="F:DNA binding"/>
    <property type="evidence" value="ECO:0007669"/>
    <property type="project" value="UniProtKB-UniRule"/>
</dbReference>
<dbReference type="GO" id="GO:0003887">
    <property type="term" value="F:DNA-directed DNA polymerase activity"/>
    <property type="evidence" value="ECO:0007669"/>
    <property type="project" value="UniProtKB-UniRule"/>
</dbReference>
<dbReference type="GO" id="GO:0004519">
    <property type="term" value="F:endonuclease activity"/>
    <property type="evidence" value="ECO:0007669"/>
    <property type="project" value="UniProtKB-KW"/>
</dbReference>
<dbReference type="GO" id="GO:0008310">
    <property type="term" value="F:single-stranded DNA 3'-5' DNA exonuclease activity"/>
    <property type="evidence" value="ECO:0007669"/>
    <property type="project" value="UniProtKB-EC"/>
</dbReference>
<dbReference type="GO" id="GO:0006308">
    <property type="term" value="P:DNA catabolic process"/>
    <property type="evidence" value="ECO:0007669"/>
    <property type="project" value="UniProtKB-UniRule"/>
</dbReference>
<dbReference type="GO" id="GO:0006261">
    <property type="term" value="P:DNA-templated DNA replication"/>
    <property type="evidence" value="ECO:0007669"/>
    <property type="project" value="UniProtKB-UniRule"/>
</dbReference>
<dbReference type="GO" id="GO:0016539">
    <property type="term" value="P:intein-mediated protein splicing"/>
    <property type="evidence" value="ECO:0007669"/>
    <property type="project" value="InterPro"/>
</dbReference>
<dbReference type="GO" id="GO:0006314">
    <property type="term" value="P:intron homing"/>
    <property type="evidence" value="ECO:0007669"/>
    <property type="project" value="UniProtKB-KW"/>
</dbReference>
<dbReference type="CDD" id="cd00081">
    <property type="entry name" value="Hint"/>
    <property type="match status" value="2"/>
</dbReference>
<dbReference type="Gene3D" id="2.170.16.10">
    <property type="entry name" value="Hedgehog/Intein (Hint) domain"/>
    <property type="match status" value="2"/>
</dbReference>
<dbReference type="Gene3D" id="3.10.28.10">
    <property type="entry name" value="Homing endonucleases"/>
    <property type="match status" value="2"/>
</dbReference>
<dbReference type="HAMAP" id="MF_00324">
    <property type="entry name" value="DNApol_II_L_arch"/>
    <property type="match status" value="1"/>
</dbReference>
<dbReference type="InterPro" id="IPR003586">
    <property type="entry name" value="Hint_dom_C"/>
</dbReference>
<dbReference type="InterPro" id="IPR003587">
    <property type="entry name" value="Hint_dom_N"/>
</dbReference>
<dbReference type="InterPro" id="IPR036844">
    <property type="entry name" value="Hint_dom_sf"/>
</dbReference>
<dbReference type="InterPro" id="IPR027434">
    <property type="entry name" value="Homing_endonucl"/>
</dbReference>
<dbReference type="InterPro" id="IPR006142">
    <property type="entry name" value="INTEIN"/>
</dbReference>
<dbReference type="InterPro" id="IPR004042">
    <property type="entry name" value="Intein_endonuc_central"/>
</dbReference>
<dbReference type="InterPro" id="IPR006141">
    <property type="entry name" value="Intein_N"/>
</dbReference>
<dbReference type="InterPro" id="IPR004475">
    <property type="entry name" value="PolC_DP2"/>
</dbReference>
<dbReference type="InterPro" id="IPR056172">
    <property type="entry name" value="PolC_DP2_cat_dom"/>
</dbReference>
<dbReference type="InterPro" id="IPR056171">
    <property type="entry name" value="PolC_DP2_central_dom"/>
</dbReference>
<dbReference type="InterPro" id="IPR016033">
    <property type="entry name" value="PolC_DP2_N"/>
</dbReference>
<dbReference type="NCBIfam" id="TIGR01445">
    <property type="entry name" value="intein_Nterm"/>
    <property type="match status" value="1"/>
</dbReference>
<dbReference type="NCBIfam" id="TIGR00354">
    <property type="entry name" value="polC"/>
    <property type="match status" value="1"/>
</dbReference>
<dbReference type="PANTHER" id="PTHR42210">
    <property type="entry name" value="DNA POLYMERASE II LARGE SUBUNIT"/>
    <property type="match status" value="1"/>
</dbReference>
<dbReference type="PANTHER" id="PTHR42210:SF1">
    <property type="entry name" value="DNA POLYMERASE II LARGE SUBUNIT"/>
    <property type="match status" value="1"/>
</dbReference>
<dbReference type="Pfam" id="PF14890">
    <property type="entry name" value="Intein_splicing"/>
    <property type="match status" value="2"/>
</dbReference>
<dbReference type="Pfam" id="PF24846">
    <property type="entry name" value="PolC_DP2_cat"/>
    <property type="match status" value="3"/>
</dbReference>
<dbReference type="Pfam" id="PF24844">
    <property type="entry name" value="PolC_DP2_central"/>
    <property type="match status" value="1"/>
</dbReference>
<dbReference type="Pfam" id="PF03833">
    <property type="entry name" value="PolC_DP2_N"/>
    <property type="match status" value="1"/>
</dbReference>
<dbReference type="PRINTS" id="PR00379">
    <property type="entry name" value="INTEIN"/>
</dbReference>
<dbReference type="SMART" id="SM00305">
    <property type="entry name" value="HintC"/>
    <property type="match status" value="2"/>
</dbReference>
<dbReference type="SMART" id="SM00306">
    <property type="entry name" value="HintN"/>
    <property type="match status" value="2"/>
</dbReference>
<dbReference type="SUPFAM" id="SSF51294">
    <property type="entry name" value="Hedgehog/intein (Hint) domain"/>
    <property type="match status" value="2"/>
</dbReference>
<dbReference type="SUPFAM" id="SSF55608">
    <property type="entry name" value="Homing endonucleases"/>
    <property type="match status" value="2"/>
</dbReference>
<dbReference type="PROSITE" id="PS50819">
    <property type="entry name" value="INTEIN_ENDONUCLEASE"/>
    <property type="match status" value="2"/>
</dbReference>
<dbReference type="PROSITE" id="PS50817">
    <property type="entry name" value="INTEIN_N_TER"/>
    <property type="match status" value="1"/>
</dbReference>
<evidence type="ECO:0000250" key="1"/>
<evidence type="ECO:0000255" key="2"/>
<evidence type="ECO:0000255" key="3">
    <source>
        <dbReference type="HAMAP-Rule" id="MF_00324"/>
    </source>
</evidence>
<evidence type="ECO:0000256" key="4">
    <source>
        <dbReference type="SAM" id="MobiDB-lite"/>
    </source>
</evidence>
<evidence type="ECO:0000305" key="5"/>
<name>DP2L_HALWD</name>
<sequence>MRDADKQYFETLESHLEQAFARARQAKGQGYDPKPEVEIPVARDMADRVENILAIPDVAERIRELDDERSREEVALELVTDFVEGTVGDYDTREGKIEGAVRTAVALLTEGVVAAPIEGIDRVEILSDDDGSEFVNVYYAGPIRSAGGTAQALSVLVADYARSLLDIDEYSARTDETERYAEEVSLYDRETGLQYSPKDKETKFITKHMPIMLDGEATGNEEVSGYRDLERVDTNAARGGMCLVLAEGIALKAPKIQRYTRQLAEVEWPWLQDLIDDTIGSDEHSNNSVKNGEADIVKTDKDTNESETEDGIDNDDYNDSGLEPANSPRADATNKYLRDLIAGRPVFGHPSAAGAFRLRYGRARNHGFATAGVHPATMHIVDDFIATGTQLKTERPGKAGGVVPVDSIKGPTVRLANGDVRCINDPEEAEKLQNGVEKILDLGEYLVNFGEFIENNHPLAPAAYVFEWWIQEFEASNADVQALRDDPTVDLESPTFENAMRWAKKHDIPLHPAYTYLWHDISVTEFDHLADAVAAGEITMNEVSDTNSASGNTSLRANTNTDDTLTIDTTPAIRETMERLLIEHHQDSDSIHIPAWRALALSLGIKIESDNDTGIGDRMWSLTDLSKHARKQDDGKSAIAAVNEVAPFQVRERAPTRIGSRMGRPEKSEDRDLSPAVHTLFPIGEAGGNQRNLSDAAQSFGDNTERGQISVQLGKRRCPYCETVGFELQCAECGRHTEPQFVCRECESVLSPDESGRVHCDRCERDVTSAEWQDIDLHQRYRDALDRVDERESSFEILKGVKGLTSSNKTPEPLEKGILRAKHGVSSFKDGTVRYDMTDLPVTAVRPKELDVTAAHFRELGYQTDINGNPLQFDDQLVELKVQDIVLPDGAAEHMMKTADFVDDLLEQFYELNQFYQIDERDDLIGELVFGMAPHTSAAVVGRIVGFTSAAVGYAHPYFHAAKRRNCFHPETKIWFRDTDNEWHHETIQTFVEDRLDDPEIDAVGTLVQEVDDNTDREISVPSIDDNGNERLQSVTAVSKHRAPNHLVQIETISGREITITPDHEMHIFEQGNLVSKQASKITSGEYAVIPKRLQTISPSSHTPQHDLLREFLTRDELTADRLIIHTSDPVRLCNRVFPEEVTSCKDAVEIMQNTACHLDKNKETLIGWLGEGRIPVALLRGFVETDEALLMSIPDDVQIGLRGEKVRIDRHIGFTEELTSLLGYYAAAGIVHTQTNPISYESAQQEQSRITFYNIDTQTQTDLLNALNSVFEIEPIQYNLDGEILGVPGELIRRVFDTVFDVGTQPSHKRIPQALFDASESHITSYLRCFFSTHDSLTTDTRDISATTVSREFKEDIIAALRRLGITAEVTTQQSRSVPEVLPDWYAIDDITHHDADNSLNLTRSYVISIASSDAVTLQRDRQAQEQIKYDAQGLIANNNAIHQSRQVTDGGRKDYITEPITDIEYVDADIDYTYCLTVSETHSLIVNDLSQKQCDGDEDCVMLLMDGLLNFSREYLPDKRGGSVAADSRLVAVSPDDKIVFTTIEDFWKKLNTPIERNGKFRKRTCVSEGWQTYAFDENHEASLRPIEKAIRYTADESEQLRRITTQLGRSLDITDEHSLFRYDDGIEEVAGDDLTAGDIIVAPRTLDVEVTQTTLDLSEYIHDNERCPSEQTGSGELNLASKSAISDSRNKETPGVTHNILPQRSKFTDEMTTLSPTAVGGLESEQNETLRVGESTGAIERYINVDDSFGWLLGQFIAQRSISTDALTMTVHTAAEKHAERIVATSDSVFGIKPTVNSIERGYEIVFPSVFDTIVSGLTAKEQSEPEQDVDHTHTDEIGIPECILHAPDDIVLSFLQGFILAENAQRKGNAASEASEMVSESETTVTLETPSVGVKDGLVFLCHRLGVITDISEKSGEEYSVHFEESRYTVSIATEGKTNPLDQILNGERPTMPEGVSVPVPDALLTIHESIANSPHIDQVIPDTVVQQETVSLETLQSLLTGLSTVDLPAQLEAKRDELTLLTEGDLSYLRVESVECVDYDGYLYDLQVGGEPVFTANWLYAHNSMDAPLVMSSRIDPSEIDDEAHNMDIVRQYPREFYEATRRMEDPDEWEEEVTIAEEYLDTDNEYTGFNHTHDTTDIAAGPDLSAYKTLDSMMDKMDAQLELARKLRAVDETDVAERVIEYHFLPDLIGNLRAFSRQQTRCLDCGESYRRMPLTGECRECGGRVNLTVHEGSVNKYMDTAIHIAEEFDCREYTKQRLEVLERSLESIFEDDTNKQSGIADFM</sequence>
<feature type="chain" id="PRO_0000294680" description="DNA polymerase II large subunit, 1st part" evidence="2">
    <location>
        <begin position="1"/>
        <end position="966"/>
    </location>
</feature>
<feature type="chain" id="PRO_0000294681" description="Hwa polC 1 intein" evidence="2">
    <location>
        <begin position="967"/>
        <end position="1495"/>
    </location>
</feature>
<feature type="chain" id="PRO_0000294682" description="DNA polymerase II large subunit, 2nd part" evidence="2">
    <location>
        <begin position="1496"/>
        <end position="1524"/>
    </location>
</feature>
<feature type="chain" id="PRO_0000294683" description="Hwa polC 2 intein" evidence="2">
    <location>
        <begin position="1525"/>
        <end position="2068"/>
    </location>
</feature>
<feature type="chain" id="PRO_0000294684" description="DNA polymerase II large subunit, 3rd part" evidence="2">
    <location>
        <begin position="2069"/>
        <end position="2289"/>
    </location>
</feature>
<feature type="domain" description="DOD-type homing endonuclease 1">
    <location>
        <begin position="1222"/>
        <end position="1367"/>
    </location>
</feature>
<feature type="domain" description="DOD-type homing endonuclease 2">
    <location>
        <begin position="1755"/>
        <end position="1911"/>
    </location>
</feature>
<feature type="region of interest" description="Disordered" evidence="4">
    <location>
        <begin position="279"/>
        <end position="330"/>
    </location>
</feature>
<feature type="region of interest" description="Disordered" evidence="4">
    <location>
        <begin position="544"/>
        <end position="563"/>
    </location>
</feature>
<feature type="compositionally biased region" description="Basic and acidic residues" evidence="4">
    <location>
        <begin position="292"/>
        <end position="304"/>
    </location>
</feature>
<feature type="compositionally biased region" description="Acidic residues" evidence="4">
    <location>
        <begin position="305"/>
        <end position="318"/>
    </location>
</feature>
<feature type="compositionally biased region" description="Polar residues" evidence="4">
    <location>
        <begin position="544"/>
        <end position="557"/>
    </location>
</feature>
<comment type="function">
    <text evidence="1">Possesses two activities: a DNA synthesis (polymerase) and an exonucleolytic activity that degrades single-stranded DNA in the 3'- to 5'-direction. Has a template-primer preference which is characteristic of a replicative DNA polymerase (By similarity).</text>
</comment>
<comment type="catalytic activity">
    <reaction evidence="3">
        <text>DNA(n) + a 2'-deoxyribonucleoside 5'-triphosphate = DNA(n+1) + diphosphate</text>
        <dbReference type="Rhea" id="RHEA:22508"/>
        <dbReference type="Rhea" id="RHEA-COMP:17339"/>
        <dbReference type="Rhea" id="RHEA-COMP:17340"/>
        <dbReference type="ChEBI" id="CHEBI:33019"/>
        <dbReference type="ChEBI" id="CHEBI:61560"/>
        <dbReference type="ChEBI" id="CHEBI:173112"/>
        <dbReference type="EC" id="2.7.7.7"/>
    </reaction>
</comment>
<comment type="catalytic activity">
    <reaction evidence="3">
        <text>Exonucleolytic cleavage in the 3'- to 5'-direction to yield nucleoside 5'-phosphates.</text>
        <dbReference type="EC" id="3.1.11.1"/>
    </reaction>
</comment>
<comment type="subunit">
    <text evidence="3">Heterodimer of a large subunit and a small subunit.</text>
</comment>
<comment type="PTM">
    <text evidence="5">This protein undergoes a protein self splicing that involves a post-translational excision of the intervening region (intein) followed by peptide ligation.</text>
</comment>
<comment type="similarity">
    <text evidence="3">Belongs to the archaeal DNA polymerase II family.</text>
</comment>
<accession>Q18ER3</accession>
<keyword id="KW-0068">Autocatalytic cleavage</keyword>
<keyword id="KW-0235">DNA replication</keyword>
<keyword id="KW-0238">DNA-binding</keyword>
<keyword id="KW-0239">DNA-directed DNA polymerase</keyword>
<keyword id="KW-0255">Endonuclease</keyword>
<keyword id="KW-0269">Exonuclease</keyword>
<keyword id="KW-0378">Hydrolase</keyword>
<keyword id="KW-0404">Intron homing</keyword>
<keyword id="KW-0511">Multifunctional enzyme</keyword>
<keyword id="KW-0540">Nuclease</keyword>
<keyword id="KW-0548">Nucleotidyltransferase</keyword>
<keyword id="KW-0651">Protein splicing</keyword>
<keyword id="KW-1185">Reference proteome</keyword>
<keyword id="KW-0677">Repeat</keyword>
<keyword id="KW-0808">Transferase</keyword>
<organism>
    <name type="scientific">Haloquadratum walsbyi (strain DSM 16790 / HBSQ001)</name>
    <dbReference type="NCBI Taxonomy" id="362976"/>
    <lineage>
        <taxon>Archaea</taxon>
        <taxon>Methanobacteriati</taxon>
        <taxon>Methanobacteriota</taxon>
        <taxon>Stenosarchaea group</taxon>
        <taxon>Halobacteria</taxon>
        <taxon>Halobacteriales</taxon>
        <taxon>Haloferacaceae</taxon>
        <taxon>Haloquadratum</taxon>
    </lineage>
</organism>